<protein>
    <recommendedName>
        <fullName evidence="1">Proteasome subunit beta 1</fullName>
        <ecNumber evidence="1">3.4.25.1</ecNumber>
    </recommendedName>
    <alternativeName>
        <fullName evidence="1">20S proteasome beta subunit 1</fullName>
    </alternativeName>
    <alternativeName>
        <fullName evidence="1">Proteasome core protein PsmB 1</fullName>
    </alternativeName>
</protein>
<comment type="function">
    <text evidence="1">Component of the proteasome core, a large protease complex with broad specificity involved in protein degradation.</text>
</comment>
<comment type="catalytic activity">
    <reaction evidence="1">
        <text>Cleavage of peptide bonds with very broad specificity.</text>
        <dbReference type="EC" id="3.4.25.1"/>
    </reaction>
</comment>
<comment type="activity regulation">
    <text evidence="1">The formation of the proteasomal ATPase PAN-20S proteasome complex, via the docking of the C-termini of PAN into the intersubunit pockets in the alpha-rings, triggers opening of the gate for substrate entry. Interconversion between the open-gate and close-gate conformations leads to a dynamic regulation of the 20S proteasome proteolysis activity.</text>
</comment>
<comment type="subunit">
    <text evidence="1">The 20S proteasome core is composed of 14 alpha and 14 beta subunits that assemble into four stacked heptameric rings, resulting in a barrel-shaped structure. The two inner rings, each composed of seven catalytic beta subunits, are sandwiched by two outer rings, each composed of seven alpha subunits. The catalytic chamber with the active sites is on the inside of the barrel. Has a gated structure, the ends of the cylinder being occluded by the N-termini of the alpha-subunits. Is capped at one or both ends by the proteasome regulatory ATPase, PAN.</text>
</comment>
<comment type="subcellular location">
    <subcellularLocation>
        <location evidence="1">Cytoplasm</location>
    </subcellularLocation>
</comment>
<comment type="similarity">
    <text evidence="1">Belongs to the peptidase T1B family.</text>
</comment>
<keyword id="KW-0068">Autocatalytic cleavage</keyword>
<keyword id="KW-0963">Cytoplasm</keyword>
<keyword id="KW-0378">Hydrolase</keyword>
<keyword id="KW-0645">Protease</keyword>
<keyword id="KW-0647">Proteasome</keyword>
<keyword id="KW-0888">Threonine protease</keyword>
<keyword id="KW-0865">Zymogen</keyword>
<evidence type="ECO:0000255" key="1">
    <source>
        <dbReference type="HAMAP-Rule" id="MF_02113"/>
    </source>
</evidence>
<evidence type="ECO:0000256" key="2">
    <source>
        <dbReference type="SAM" id="MobiDB-lite"/>
    </source>
</evidence>
<feature type="propeptide" id="PRO_0000397310" description="Removed in mature form; by autocatalysis" evidence="1">
    <location>
        <begin position="1"/>
        <end position="48"/>
    </location>
</feature>
<feature type="chain" id="PRO_0000397311" description="Proteasome subunit beta 1">
    <location>
        <begin position="49"/>
        <end position="243"/>
    </location>
</feature>
<feature type="region of interest" description="Disordered" evidence="2">
    <location>
        <begin position="1"/>
        <end position="34"/>
    </location>
</feature>
<feature type="compositionally biased region" description="Polar residues" evidence="2">
    <location>
        <begin position="1"/>
        <end position="14"/>
    </location>
</feature>
<feature type="active site" description="Nucleophile" evidence="1">
    <location>
        <position position="49"/>
    </location>
</feature>
<accession>D2RQX3</accession>
<gene>
    <name evidence="1" type="primary">psmB1</name>
    <name type="ordered locus">Htur_1568</name>
</gene>
<name>PSB1_HALTV</name>
<sequence>MRAPQHNSDFSRTVDQLADDPNPYEPEIGSMPQNDLTRADLDNVNKTGTTTIGISTADGVVIATDMRASLGGRFVSNKNVQKVEQIHPTGALTLVGSVGGAQSFISSLRAEVNLYESRRGEQMSIDALATLAGNFARGGPFFAIHPILGGVDEEGSHVYSIDPAGGVMEDDYTVTGSGMQLAYGHLEQAYEEDMSNEEAVSVAAHGIKSAVERDTGSGNGVFLCEITDEGVDIHGHHDFDEVL</sequence>
<proteinExistence type="inferred from homology"/>
<organism>
    <name type="scientific">Haloterrigena turkmenica (strain ATCC 51198 / DSM 5511 / JCM 9101 / NCIMB 13204 / VKM B-1734 / 4k)</name>
    <name type="common">Halococcus turkmenicus</name>
    <dbReference type="NCBI Taxonomy" id="543526"/>
    <lineage>
        <taxon>Archaea</taxon>
        <taxon>Methanobacteriati</taxon>
        <taxon>Methanobacteriota</taxon>
        <taxon>Stenosarchaea group</taxon>
        <taxon>Halobacteria</taxon>
        <taxon>Halobacteriales</taxon>
        <taxon>Natrialbaceae</taxon>
        <taxon>Haloterrigena</taxon>
    </lineage>
</organism>
<reference key="1">
    <citation type="journal article" date="2010" name="Stand. Genomic Sci.">
        <title>Complete genome sequence of Haloterrigena turkmenica type strain (4k).</title>
        <authorList>
            <person name="Saunders E."/>
            <person name="Tindall B.J."/>
            <person name="Fahnrich R."/>
            <person name="Lapidus A."/>
            <person name="Copeland A."/>
            <person name="Del Rio T.G."/>
            <person name="Lucas S."/>
            <person name="Chen F."/>
            <person name="Tice H."/>
            <person name="Cheng J.F."/>
            <person name="Han C."/>
            <person name="Detter J.C."/>
            <person name="Bruce D."/>
            <person name="Goodwin L."/>
            <person name="Chain P."/>
            <person name="Pitluck S."/>
            <person name="Pati A."/>
            <person name="Ivanova N."/>
            <person name="Mavromatis K."/>
            <person name="Chen A."/>
            <person name="Palaniappan K."/>
            <person name="Land M."/>
            <person name="Hauser L."/>
            <person name="Chang Y.J."/>
            <person name="Jeffries C.D."/>
            <person name="Brettin T."/>
            <person name="Rohde M."/>
            <person name="Goker M."/>
            <person name="Bristow J."/>
            <person name="Eisen J.A."/>
            <person name="Markowitz V."/>
            <person name="Hugenholtz P."/>
            <person name="Klenk H.P."/>
            <person name="Kyrpides N.C."/>
        </authorList>
    </citation>
    <scope>NUCLEOTIDE SEQUENCE [LARGE SCALE GENOMIC DNA]</scope>
    <source>
        <strain>ATCC 51198 / DSM 5511 / JCM 9101 / NCIMB 13204 / VKM B-1734 / 4k</strain>
    </source>
</reference>
<dbReference type="EC" id="3.4.25.1" evidence="1"/>
<dbReference type="EMBL" id="CP001860">
    <property type="protein sequence ID" value="ADB60454.1"/>
    <property type="molecule type" value="Genomic_DNA"/>
</dbReference>
<dbReference type="SMR" id="D2RQX3"/>
<dbReference type="STRING" id="543526.Htur_1568"/>
<dbReference type="MEROPS" id="T01.002"/>
<dbReference type="GeneID" id="8742159"/>
<dbReference type="KEGG" id="htu:Htur_1568"/>
<dbReference type="eggNOG" id="arCOG00970">
    <property type="taxonomic scope" value="Archaea"/>
</dbReference>
<dbReference type="HOGENOM" id="CLU_035750_7_2_2"/>
<dbReference type="OrthoDB" id="6330at2157"/>
<dbReference type="Proteomes" id="UP000001903">
    <property type="component" value="Chromosome"/>
</dbReference>
<dbReference type="GO" id="GO:0005737">
    <property type="term" value="C:cytoplasm"/>
    <property type="evidence" value="ECO:0007669"/>
    <property type="project" value="UniProtKB-SubCell"/>
</dbReference>
<dbReference type="GO" id="GO:0019774">
    <property type="term" value="C:proteasome core complex, beta-subunit complex"/>
    <property type="evidence" value="ECO:0007669"/>
    <property type="project" value="UniProtKB-UniRule"/>
</dbReference>
<dbReference type="GO" id="GO:0004298">
    <property type="term" value="F:threonine-type endopeptidase activity"/>
    <property type="evidence" value="ECO:0007669"/>
    <property type="project" value="UniProtKB-UniRule"/>
</dbReference>
<dbReference type="GO" id="GO:0010498">
    <property type="term" value="P:proteasomal protein catabolic process"/>
    <property type="evidence" value="ECO:0007669"/>
    <property type="project" value="UniProtKB-UniRule"/>
</dbReference>
<dbReference type="Gene3D" id="3.60.20.10">
    <property type="entry name" value="Glutamine Phosphoribosylpyrophosphate, subunit 1, domain 1"/>
    <property type="match status" value="1"/>
</dbReference>
<dbReference type="HAMAP" id="MF_02113_A">
    <property type="entry name" value="Proteasome_B_A"/>
    <property type="match status" value="1"/>
</dbReference>
<dbReference type="InterPro" id="IPR029055">
    <property type="entry name" value="Ntn_hydrolases_N"/>
</dbReference>
<dbReference type="InterPro" id="IPR019983">
    <property type="entry name" value="Pept_T1A_Psome_bsu_arc"/>
</dbReference>
<dbReference type="InterPro" id="IPR000243">
    <property type="entry name" value="Pept_T1A_subB"/>
</dbReference>
<dbReference type="InterPro" id="IPR001353">
    <property type="entry name" value="Proteasome_sua/b"/>
</dbReference>
<dbReference type="InterPro" id="IPR023333">
    <property type="entry name" value="Proteasome_suB-type"/>
</dbReference>
<dbReference type="NCBIfam" id="TIGR03634">
    <property type="entry name" value="arc_protsome_B"/>
    <property type="match status" value="1"/>
</dbReference>
<dbReference type="PANTHER" id="PTHR32194:SF0">
    <property type="entry name" value="ATP-DEPENDENT PROTEASE SUBUNIT HSLV"/>
    <property type="match status" value="1"/>
</dbReference>
<dbReference type="PANTHER" id="PTHR32194">
    <property type="entry name" value="METALLOPROTEASE TLDD"/>
    <property type="match status" value="1"/>
</dbReference>
<dbReference type="Pfam" id="PF00227">
    <property type="entry name" value="Proteasome"/>
    <property type="match status" value="1"/>
</dbReference>
<dbReference type="PRINTS" id="PR00141">
    <property type="entry name" value="PROTEASOME"/>
</dbReference>
<dbReference type="SUPFAM" id="SSF56235">
    <property type="entry name" value="N-terminal nucleophile aminohydrolases (Ntn hydrolases)"/>
    <property type="match status" value="1"/>
</dbReference>
<dbReference type="PROSITE" id="PS51476">
    <property type="entry name" value="PROTEASOME_BETA_2"/>
    <property type="match status" value="1"/>
</dbReference>